<keyword id="KW-1185">Reference proteome</keyword>
<keyword id="KW-0687">Ribonucleoprotein</keyword>
<keyword id="KW-0689">Ribosomal protein</keyword>
<dbReference type="EMBL" id="AM422018">
    <property type="protein sequence ID" value="CAM11952.1"/>
    <property type="molecule type" value="Genomic_DNA"/>
</dbReference>
<dbReference type="SMR" id="B1VAH9"/>
<dbReference type="STRING" id="59748.PA0618"/>
<dbReference type="KEGG" id="pal:PA0618"/>
<dbReference type="eggNOG" id="COG0828">
    <property type="taxonomic scope" value="Bacteria"/>
</dbReference>
<dbReference type="Proteomes" id="UP000008323">
    <property type="component" value="Chromosome"/>
</dbReference>
<dbReference type="GO" id="GO:1990904">
    <property type="term" value="C:ribonucleoprotein complex"/>
    <property type="evidence" value="ECO:0007669"/>
    <property type="project" value="UniProtKB-KW"/>
</dbReference>
<dbReference type="GO" id="GO:0005840">
    <property type="term" value="C:ribosome"/>
    <property type="evidence" value="ECO:0007669"/>
    <property type="project" value="UniProtKB-KW"/>
</dbReference>
<dbReference type="GO" id="GO:0003735">
    <property type="term" value="F:structural constituent of ribosome"/>
    <property type="evidence" value="ECO:0007669"/>
    <property type="project" value="InterPro"/>
</dbReference>
<dbReference type="GO" id="GO:0006412">
    <property type="term" value="P:translation"/>
    <property type="evidence" value="ECO:0007669"/>
    <property type="project" value="UniProtKB-UniRule"/>
</dbReference>
<dbReference type="Gene3D" id="1.20.5.1150">
    <property type="entry name" value="Ribosomal protein S8"/>
    <property type="match status" value="1"/>
</dbReference>
<dbReference type="HAMAP" id="MF_00358">
    <property type="entry name" value="Ribosomal_bS21"/>
    <property type="match status" value="1"/>
</dbReference>
<dbReference type="InterPro" id="IPR001911">
    <property type="entry name" value="Ribosomal_bS21"/>
</dbReference>
<dbReference type="InterPro" id="IPR038380">
    <property type="entry name" value="Ribosomal_bS21_sf"/>
</dbReference>
<dbReference type="NCBIfam" id="TIGR00030">
    <property type="entry name" value="S21p"/>
    <property type="match status" value="1"/>
</dbReference>
<dbReference type="Pfam" id="PF01165">
    <property type="entry name" value="Ribosomal_S21"/>
    <property type="match status" value="1"/>
</dbReference>
<dbReference type="PRINTS" id="PR00976">
    <property type="entry name" value="RIBOSOMALS21"/>
</dbReference>
<reference key="1">
    <citation type="journal article" date="2008" name="J. Bacteriol.">
        <title>Comparative genome analysis of 'Candidatus Phytoplasma australiense' (subgroup tuf-Australia I; rp-A) and 'Ca. Phytoplasma asteris' strains OY-M and AY-WB.</title>
        <authorList>
            <person name="Tran-Nguyen L.T."/>
            <person name="Kube M."/>
            <person name="Schneider B."/>
            <person name="Reinhardt R."/>
            <person name="Gibb K.S."/>
        </authorList>
    </citation>
    <scope>NUCLEOTIDE SEQUENCE [LARGE SCALE GENOMIC DNA]</scope>
</reference>
<accession>B1VAH9</accession>
<proteinExistence type="inferred from homology"/>
<feature type="chain" id="PRO_1000120645" description="Small ribosomal subunit protein bS21">
    <location>
        <begin position="1"/>
        <end position="57"/>
    </location>
</feature>
<evidence type="ECO:0000255" key="1">
    <source>
        <dbReference type="HAMAP-Rule" id="MF_00358"/>
    </source>
</evidence>
<evidence type="ECO:0000305" key="2"/>
<comment type="similarity">
    <text evidence="1">Belongs to the bacterial ribosomal protein bS21 family.</text>
</comment>
<gene>
    <name evidence="1" type="primary">rpsU</name>
    <name type="ordered locus">PA0618</name>
</gene>
<organism>
    <name type="scientific">Phytoplasma australiense</name>
    <dbReference type="NCBI Taxonomy" id="59748"/>
    <lineage>
        <taxon>Bacteria</taxon>
        <taxon>Bacillati</taxon>
        <taxon>Mycoplasmatota</taxon>
        <taxon>Mollicutes</taxon>
        <taxon>Acholeplasmatales</taxon>
        <taxon>Acholeplasmataceae</taxon>
        <taxon>Candidatus Phytoplasma</taxon>
        <taxon>16SrXII (Stolbur group)</taxon>
    </lineage>
</organism>
<name>RS21_PHYAS</name>
<protein>
    <recommendedName>
        <fullName evidence="1">Small ribosomal subunit protein bS21</fullName>
    </recommendedName>
    <alternativeName>
        <fullName evidence="2">30S ribosomal protein S21</fullName>
    </alternativeName>
</protein>
<sequence>MSKIFLRKGETIDETLRRFKREVAKNGVLAEARRKEHYIKPSVQRKNLQKSMRGKRR</sequence>